<organism>
    <name type="scientific">Rhizobium rhizogenes (strain K84 / ATCC BAA-868)</name>
    <name type="common">Agrobacterium radiobacter</name>
    <dbReference type="NCBI Taxonomy" id="311403"/>
    <lineage>
        <taxon>Bacteria</taxon>
        <taxon>Pseudomonadati</taxon>
        <taxon>Pseudomonadota</taxon>
        <taxon>Alphaproteobacteria</taxon>
        <taxon>Hyphomicrobiales</taxon>
        <taxon>Rhizobiaceae</taxon>
        <taxon>Rhizobium/Agrobacterium group</taxon>
        <taxon>Rhizobium</taxon>
    </lineage>
</organism>
<comment type="function">
    <text evidence="1">Cell wall formation. Catalyzes the transfer of a GlcNAc subunit on undecaprenyl-pyrophosphoryl-MurNAc-pentapeptide (lipid intermediate I) to form undecaprenyl-pyrophosphoryl-MurNAc-(pentapeptide)GlcNAc (lipid intermediate II).</text>
</comment>
<comment type="catalytic activity">
    <reaction evidence="1">
        <text>di-trans,octa-cis-undecaprenyl diphospho-N-acetyl-alpha-D-muramoyl-L-alanyl-D-glutamyl-meso-2,6-diaminopimeloyl-D-alanyl-D-alanine + UDP-N-acetyl-alpha-D-glucosamine = di-trans,octa-cis-undecaprenyl diphospho-[N-acetyl-alpha-D-glucosaminyl-(1-&gt;4)]-N-acetyl-alpha-D-muramoyl-L-alanyl-D-glutamyl-meso-2,6-diaminopimeloyl-D-alanyl-D-alanine + UDP + H(+)</text>
        <dbReference type="Rhea" id="RHEA:31227"/>
        <dbReference type="ChEBI" id="CHEBI:15378"/>
        <dbReference type="ChEBI" id="CHEBI:57705"/>
        <dbReference type="ChEBI" id="CHEBI:58223"/>
        <dbReference type="ChEBI" id="CHEBI:61387"/>
        <dbReference type="ChEBI" id="CHEBI:61388"/>
        <dbReference type="EC" id="2.4.1.227"/>
    </reaction>
</comment>
<comment type="pathway">
    <text evidence="1">Cell wall biogenesis; peptidoglycan biosynthesis.</text>
</comment>
<comment type="subcellular location">
    <subcellularLocation>
        <location evidence="1">Cell inner membrane</location>
        <topology evidence="1">Peripheral membrane protein</topology>
        <orientation evidence="1">Cytoplasmic side</orientation>
    </subcellularLocation>
</comment>
<comment type="similarity">
    <text evidence="1">Belongs to the glycosyltransferase 28 family. MurG subfamily.</text>
</comment>
<evidence type="ECO:0000255" key="1">
    <source>
        <dbReference type="HAMAP-Rule" id="MF_00033"/>
    </source>
</evidence>
<proteinExistence type="inferred from homology"/>
<feature type="chain" id="PRO_1000116999" description="UDP-N-acetylglucosamine--N-acetylmuramyl-(pentapeptide) pyrophosphoryl-undecaprenol N-acetylglucosamine transferase">
    <location>
        <begin position="1"/>
        <end position="374"/>
    </location>
</feature>
<feature type="binding site" evidence="1">
    <location>
        <begin position="13"/>
        <end position="15"/>
    </location>
    <ligand>
        <name>UDP-N-acetyl-alpha-D-glucosamine</name>
        <dbReference type="ChEBI" id="CHEBI:57705"/>
    </ligand>
</feature>
<feature type="binding site" evidence="1">
    <location>
        <position position="124"/>
    </location>
    <ligand>
        <name>UDP-N-acetyl-alpha-D-glucosamine</name>
        <dbReference type="ChEBI" id="CHEBI:57705"/>
    </ligand>
</feature>
<feature type="binding site" evidence="1">
    <location>
        <position position="165"/>
    </location>
    <ligand>
        <name>UDP-N-acetyl-alpha-D-glucosamine</name>
        <dbReference type="ChEBI" id="CHEBI:57705"/>
    </ligand>
</feature>
<feature type="binding site" evidence="1">
    <location>
        <position position="193"/>
    </location>
    <ligand>
        <name>UDP-N-acetyl-alpha-D-glucosamine</name>
        <dbReference type="ChEBI" id="CHEBI:57705"/>
    </ligand>
</feature>
<feature type="binding site" evidence="1">
    <location>
        <position position="294"/>
    </location>
    <ligand>
        <name>UDP-N-acetyl-alpha-D-glucosamine</name>
        <dbReference type="ChEBI" id="CHEBI:57705"/>
    </ligand>
</feature>
<name>MURG_RHIR8</name>
<dbReference type="EC" id="2.4.1.227" evidence="1"/>
<dbReference type="EMBL" id="CP000628">
    <property type="protein sequence ID" value="ACM27048.1"/>
    <property type="molecule type" value="Genomic_DNA"/>
</dbReference>
<dbReference type="RefSeq" id="WP_012651817.1">
    <property type="nucleotide sequence ID" value="NC_011985.1"/>
</dbReference>
<dbReference type="SMR" id="B9JH51"/>
<dbReference type="STRING" id="311403.Arad_2996"/>
<dbReference type="CAZy" id="GT28">
    <property type="family name" value="Glycosyltransferase Family 28"/>
</dbReference>
<dbReference type="GeneID" id="86848919"/>
<dbReference type="KEGG" id="ara:Arad_2996"/>
<dbReference type="eggNOG" id="COG0707">
    <property type="taxonomic scope" value="Bacteria"/>
</dbReference>
<dbReference type="HOGENOM" id="CLU_037404_2_1_5"/>
<dbReference type="UniPathway" id="UPA00219"/>
<dbReference type="Proteomes" id="UP000001600">
    <property type="component" value="Chromosome 1"/>
</dbReference>
<dbReference type="GO" id="GO:0005886">
    <property type="term" value="C:plasma membrane"/>
    <property type="evidence" value="ECO:0007669"/>
    <property type="project" value="UniProtKB-SubCell"/>
</dbReference>
<dbReference type="GO" id="GO:0051991">
    <property type="term" value="F:UDP-N-acetyl-D-glucosamine:N-acetylmuramoyl-L-alanyl-D-glutamyl-meso-2,6-diaminopimelyl-D-alanyl-D-alanine-diphosphoundecaprenol 4-beta-N-acetylglucosaminlytransferase activity"/>
    <property type="evidence" value="ECO:0007669"/>
    <property type="project" value="RHEA"/>
</dbReference>
<dbReference type="GO" id="GO:0050511">
    <property type="term" value="F:undecaprenyldiphospho-muramoylpentapeptide beta-N-acetylglucosaminyltransferase activity"/>
    <property type="evidence" value="ECO:0007669"/>
    <property type="project" value="UniProtKB-UniRule"/>
</dbReference>
<dbReference type="GO" id="GO:0005975">
    <property type="term" value="P:carbohydrate metabolic process"/>
    <property type="evidence" value="ECO:0007669"/>
    <property type="project" value="InterPro"/>
</dbReference>
<dbReference type="GO" id="GO:0051301">
    <property type="term" value="P:cell division"/>
    <property type="evidence" value="ECO:0007669"/>
    <property type="project" value="UniProtKB-KW"/>
</dbReference>
<dbReference type="GO" id="GO:0071555">
    <property type="term" value="P:cell wall organization"/>
    <property type="evidence" value="ECO:0007669"/>
    <property type="project" value="UniProtKB-KW"/>
</dbReference>
<dbReference type="GO" id="GO:0030259">
    <property type="term" value="P:lipid glycosylation"/>
    <property type="evidence" value="ECO:0007669"/>
    <property type="project" value="UniProtKB-UniRule"/>
</dbReference>
<dbReference type="GO" id="GO:0009252">
    <property type="term" value="P:peptidoglycan biosynthetic process"/>
    <property type="evidence" value="ECO:0007669"/>
    <property type="project" value="UniProtKB-UniRule"/>
</dbReference>
<dbReference type="GO" id="GO:0008360">
    <property type="term" value="P:regulation of cell shape"/>
    <property type="evidence" value="ECO:0007669"/>
    <property type="project" value="UniProtKB-KW"/>
</dbReference>
<dbReference type="CDD" id="cd03785">
    <property type="entry name" value="GT28_MurG"/>
    <property type="match status" value="1"/>
</dbReference>
<dbReference type="Gene3D" id="3.40.50.2000">
    <property type="entry name" value="Glycogen Phosphorylase B"/>
    <property type="match status" value="2"/>
</dbReference>
<dbReference type="HAMAP" id="MF_00033">
    <property type="entry name" value="MurG"/>
    <property type="match status" value="1"/>
</dbReference>
<dbReference type="InterPro" id="IPR006009">
    <property type="entry name" value="GlcNAc_MurG"/>
</dbReference>
<dbReference type="InterPro" id="IPR007235">
    <property type="entry name" value="Glyco_trans_28_C"/>
</dbReference>
<dbReference type="InterPro" id="IPR004276">
    <property type="entry name" value="GlycoTrans_28_N"/>
</dbReference>
<dbReference type="NCBIfam" id="TIGR01133">
    <property type="entry name" value="murG"/>
    <property type="match status" value="1"/>
</dbReference>
<dbReference type="PANTHER" id="PTHR21015:SF22">
    <property type="entry name" value="GLYCOSYLTRANSFERASE"/>
    <property type="match status" value="1"/>
</dbReference>
<dbReference type="PANTHER" id="PTHR21015">
    <property type="entry name" value="UDP-N-ACETYLGLUCOSAMINE--N-ACETYLMURAMYL-(PENTAPEPTIDE) PYROPHOSPHORYL-UNDECAPRENOL N-ACETYLGLUCOSAMINE TRANSFERASE 1"/>
    <property type="match status" value="1"/>
</dbReference>
<dbReference type="Pfam" id="PF04101">
    <property type="entry name" value="Glyco_tran_28_C"/>
    <property type="match status" value="1"/>
</dbReference>
<dbReference type="Pfam" id="PF03033">
    <property type="entry name" value="Glyco_transf_28"/>
    <property type="match status" value="1"/>
</dbReference>
<dbReference type="SUPFAM" id="SSF53756">
    <property type="entry name" value="UDP-Glycosyltransferase/glycogen phosphorylase"/>
    <property type="match status" value="1"/>
</dbReference>
<reference key="1">
    <citation type="journal article" date="2009" name="J. Bacteriol.">
        <title>Genome sequences of three Agrobacterium biovars help elucidate the evolution of multichromosome genomes in bacteria.</title>
        <authorList>
            <person name="Slater S.C."/>
            <person name="Goldman B.S."/>
            <person name="Goodner B."/>
            <person name="Setubal J.C."/>
            <person name="Farrand S.K."/>
            <person name="Nester E.W."/>
            <person name="Burr T.J."/>
            <person name="Banta L."/>
            <person name="Dickerman A.W."/>
            <person name="Paulsen I."/>
            <person name="Otten L."/>
            <person name="Suen G."/>
            <person name="Welch R."/>
            <person name="Almeida N.F."/>
            <person name="Arnold F."/>
            <person name="Burton O.T."/>
            <person name="Du Z."/>
            <person name="Ewing A."/>
            <person name="Godsy E."/>
            <person name="Heisel S."/>
            <person name="Houmiel K.L."/>
            <person name="Jhaveri J."/>
            <person name="Lu J."/>
            <person name="Miller N.M."/>
            <person name="Norton S."/>
            <person name="Chen Q."/>
            <person name="Phoolcharoen W."/>
            <person name="Ohlin V."/>
            <person name="Ondrusek D."/>
            <person name="Pride N."/>
            <person name="Stricklin S.L."/>
            <person name="Sun J."/>
            <person name="Wheeler C."/>
            <person name="Wilson L."/>
            <person name="Zhu H."/>
            <person name="Wood D.W."/>
        </authorList>
    </citation>
    <scope>NUCLEOTIDE SEQUENCE [LARGE SCALE GENOMIC DNA]</scope>
    <source>
        <strain>K84 / ATCC BAA-868</strain>
    </source>
</reference>
<protein>
    <recommendedName>
        <fullName evidence="1">UDP-N-acetylglucosamine--N-acetylmuramyl-(pentapeptide) pyrophosphoryl-undecaprenol N-acetylglucosamine transferase</fullName>
        <ecNumber evidence="1">2.4.1.227</ecNumber>
    </recommendedName>
    <alternativeName>
        <fullName evidence="1">Undecaprenyl-PP-MurNAc-pentapeptide-UDPGlcNAc GlcNAc transferase</fullName>
    </alternativeName>
</protein>
<accession>B9JH51</accession>
<sequence length="374" mass="39420">MSKGIILLAAGGTGGHVFPAEALAYKLKERGYSVHLVTDSRAERYAGKFPADEIHVVPSATIGSKNPIKVARSLWTLWTGIRAARKLIRTIKPLCVVGFGGYPTVPPLLAATRMGVPAMIHEQNAVMGRANKALAARVQAIAGGFLPENGGTFPEKTVTTGNPVRPAVIEAAKQPYVPSVPDDPFNLVVFGGSQGAQYFSKAVPTAISLLEEPLRKRLRITQQVRPEDMETVNSCTRKLEMGADIAPFFSDMAERIGAAHLVLCRSGASTVSELAVIGRPAILVPYPYALDHDQAANAAALAATGGVKVIPQAELTPEKLSTILRGAMTMPDKLAKMAAAAKQAGKPDAASLLADMVEAIAAKRSIQDFKGAGV</sequence>
<gene>
    <name evidence="1" type="primary">murG</name>
    <name type="ordered locus">Arad_2996</name>
</gene>
<keyword id="KW-0131">Cell cycle</keyword>
<keyword id="KW-0132">Cell division</keyword>
<keyword id="KW-0997">Cell inner membrane</keyword>
<keyword id="KW-1003">Cell membrane</keyword>
<keyword id="KW-0133">Cell shape</keyword>
<keyword id="KW-0961">Cell wall biogenesis/degradation</keyword>
<keyword id="KW-0328">Glycosyltransferase</keyword>
<keyword id="KW-0472">Membrane</keyword>
<keyword id="KW-0573">Peptidoglycan synthesis</keyword>
<keyword id="KW-0808">Transferase</keyword>